<evidence type="ECO:0000250" key="1"/>
<evidence type="ECO:0000269" key="2">
    <source>
    </source>
</evidence>
<evidence type="ECO:0000303" key="3">
    <source>
    </source>
</evidence>
<evidence type="ECO:0000305" key="4"/>
<gene>
    <name type="primary">SUS5</name>
    <name type="ordered locus">Os04g0309600</name>
    <name type="ordered locus">LOC_Os04g24430</name>
    <name type="ORF">OSJNBa0033H08.16</name>
</gene>
<keyword id="KW-0025">Alternative splicing</keyword>
<keyword id="KW-0963">Cytoplasm</keyword>
<keyword id="KW-0328">Glycosyltransferase</keyword>
<keyword id="KW-0472">Membrane</keyword>
<keyword id="KW-1185">Reference proteome</keyword>
<keyword id="KW-0808">Transferase</keyword>
<sequence>MASKLSFKRMDSIAETMPDALRQSRYQMKRCFQRYVSKGKRLLKNQQLMEELEKSLDDKVEKEKLVEGFLGYIICSTQEAVVLPPFVAFAVRMNPGIWEYVKVHSDDLSVEGITPSEYLKFKETLYDEKWAKDDNSLEVDFGALDLSTPHLTLPSSIGNGLQFVSKFMSSKLGGKPESMKPLLDYLLTLNYRGEKLMINDTIDTVSKLQTALLLAEVFVSGLPKYTPYLKFEQRFQEWGLERGWGDTAERCKETLNCLSEVLQAPDPTNMEKFFSRVPSIFNIVIFSIHGYFGQEKVLGLPDTGGQVVYILDQVRAMEEELLQRIKQQGLHVTPKILVLTRLIPDAKGTKCNVELEPVENTKYSHILRVPFKTEDGKDLRQWVSRFDIYPYLERYAQDSCAKILDILEGKPDLIIGNYTDGNLVASLLSNKLCVTQGTIAHALEKTKYEDSDVKWREMDQKYHFSCQFTADMISMNTSDFIITSTYQEIAGSKEKPGQYEHHYAFTMPGLCRYATGINVFDPKFNIAAPGADQSIYFPFTQKQKRLTDLHPQIDELLYSKDDTDEHIGYLADRNKPIIFSMARLDKVKNITGLVEWYGQNKKLRDLVNLVVVAGLLDASQSKDREEIEEINKMHNLMDRYQLKGQIRWIKAQTDRVRNGELYRCIADTKGAFVQPALYEAFGLTVIEAMNCGLPTFATNQGGPAEIIIDGVSGFHVNPINDREAGIKIADFFQKCKEDPSYWNKVSTAGLQRICECYTWKIYATRVLNMGSTYSFWKTLNKEERQAKQRYLQIFYNVQYRNLAKAMARAGDQQARQTTTGVAPSEIVVRPKERKPQTRMQRILTRLAGQKPPVSE</sequence>
<proteinExistence type="evidence at transcript level"/>
<dbReference type="EC" id="2.4.1.13"/>
<dbReference type="EMBL" id="HQ895723">
    <property type="protein sequence ID" value="AEX32878.1"/>
    <property type="molecule type" value="mRNA"/>
</dbReference>
<dbReference type="EMBL" id="AL662942">
    <property type="protein sequence ID" value="CAE03984.3"/>
    <property type="status" value="ALT_SEQ"/>
    <property type="molecule type" value="Genomic_DNA"/>
</dbReference>
<dbReference type="EMBL" id="AP008210">
    <property type="protein sequence ID" value="BAF14346.1"/>
    <property type="molecule type" value="Genomic_DNA"/>
</dbReference>
<dbReference type="EMBL" id="AP014960">
    <property type="protein sequence ID" value="BAS88514.1"/>
    <property type="molecule type" value="Genomic_DNA"/>
</dbReference>
<dbReference type="EMBL" id="AK063304">
    <property type="status" value="NOT_ANNOTATED_CDS"/>
    <property type="molecule type" value="mRNA"/>
</dbReference>
<dbReference type="RefSeq" id="XP_015634172.1">
    <property type="nucleotide sequence ID" value="XM_015778686.1"/>
</dbReference>
<dbReference type="SMR" id="H6TFZ4"/>
<dbReference type="FunCoup" id="H6TFZ4">
    <property type="interactions" value="376"/>
</dbReference>
<dbReference type="STRING" id="39947.H6TFZ4"/>
<dbReference type="CAZy" id="GT4">
    <property type="family name" value="Glycosyltransferase Family 4"/>
</dbReference>
<dbReference type="PaxDb" id="39947-H6TFZ4"/>
<dbReference type="EnsemblPlants" id="Os04t0309600-02">
    <molecule id="H6TFZ4-1"/>
    <property type="protein sequence ID" value="Os04t0309600-02"/>
    <property type="gene ID" value="Os04g0309600"/>
</dbReference>
<dbReference type="Gramene" id="Os04t0309600-02">
    <molecule id="H6TFZ4-1"/>
    <property type="protein sequence ID" value="Os04t0309600-02"/>
    <property type="gene ID" value="Os04g0309600"/>
</dbReference>
<dbReference type="KEGG" id="dosa:Os04g0309600"/>
<dbReference type="eggNOG" id="KOG0853">
    <property type="taxonomic scope" value="Eukaryota"/>
</dbReference>
<dbReference type="HOGENOM" id="CLU_019158_1_0_1"/>
<dbReference type="InParanoid" id="H6TFZ4"/>
<dbReference type="OMA" id="FRTENAV"/>
<dbReference type="OrthoDB" id="937291at2759"/>
<dbReference type="BRENDA" id="2.4.1.13">
    <property type="organism ID" value="4460"/>
</dbReference>
<dbReference type="PlantReactome" id="R-OSA-1119452">
    <property type="pathway name" value="Galactose degradation II"/>
</dbReference>
<dbReference type="PlantReactome" id="R-OSA-1119465">
    <property type="pathway name" value="Sucrose biosynthesis"/>
</dbReference>
<dbReference type="Proteomes" id="UP000000763">
    <property type="component" value="Chromosome 4"/>
</dbReference>
<dbReference type="Proteomes" id="UP000059680">
    <property type="component" value="Chromosome 4"/>
</dbReference>
<dbReference type="GO" id="GO:0005737">
    <property type="term" value="C:cytoplasm"/>
    <property type="evidence" value="ECO:0007669"/>
    <property type="project" value="UniProtKB-SubCell"/>
</dbReference>
<dbReference type="GO" id="GO:0016020">
    <property type="term" value="C:membrane"/>
    <property type="evidence" value="ECO:0007669"/>
    <property type="project" value="UniProtKB-SubCell"/>
</dbReference>
<dbReference type="GO" id="GO:0016157">
    <property type="term" value="F:sucrose synthase activity"/>
    <property type="evidence" value="ECO:0000318"/>
    <property type="project" value="GO_Central"/>
</dbReference>
<dbReference type="GO" id="GO:0005985">
    <property type="term" value="P:sucrose metabolic process"/>
    <property type="evidence" value="ECO:0007669"/>
    <property type="project" value="InterPro"/>
</dbReference>
<dbReference type="FunFam" id="1.20.120.1230:FF:000001">
    <property type="entry name" value="Sucrose synthase"/>
    <property type="match status" value="1"/>
</dbReference>
<dbReference type="FunFam" id="3.10.450.330:FF:000001">
    <property type="entry name" value="Sucrose synthase"/>
    <property type="match status" value="1"/>
</dbReference>
<dbReference type="FunFam" id="3.40.50.2000:FF:000006">
    <property type="entry name" value="Sucrose synthase"/>
    <property type="match status" value="1"/>
</dbReference>
<dbReference type="Gene3D" id="1.20.120.1230">
    <property type="match status" value="1"/>
</dbReference>
<dbReference type="Gene3D" id="3.10.450.330">
    <property type="match status" value="1"/>
</dbReference>
<dbReference type="Gene3D" id="3.40.50.2000">
    <property type="entry name" value="Glycogen Phosphorylase B"/>
    <property type="match status" value="2"/>
</dbReference>
<dbReference type="InterPro" id="IPR001296">
    <property type="entry name" value="Glyco_trans_1"/>
</dbReference>
<dbReference type="InterPro" id="IPR000368">
    <property type="entry name" value="Sucrose_synth_GT-B1"/>
</dbReference>
<dbReference type="InterPro" id="IPR012820">
    <property type="entry name" value="Sucrose_synthase_pln/cyn"/>
</dbReference>
<dbReference type="InterPro" id="IPR056736">
    <property type="entry name" value="SUS_EPBD"/>
</dbReference>
<dbReference type="InterPro" id="IPR056735">
    <property type="entry name" value="SUS_N"/>
</dbReference>
<dbReference type="NCBIfam" id="TIGR02470">
    <property type="entry name" value="sucr_synth"/>
    <property type="match status" value="1"/>
</dbReference>
<dbReference type="PANTHER" id="PTHR45839">
    <property type="match status" value="1"/>
</dbReference>
<dbReference type="PANTHER" id="PTHR45839:SF4">
    <property type="entry name" value="SUCROSE SYNTHASE 5"/>
    <property type="match status" value="1"/>
</dbReference>
<dbReference type="Pfam" id="PF00534">
    <property type="entry name" value="Glycos_transf_1"/>
    <property type="match status" value="1"/>
</dbReference>
<dbReference type="Pfam" id="PF00862">
    <property type="entry name" value="GT-B_Sucrose_synth"/>
    <property type="match status" value="1"/>
</dbReference>
<dbReference type="Pfam" id="PF24862">
    <property type="entry name" value="SUS_EPBD"/>
    <property type="match status" value="1"/>
</dbReference>
<dbReference type="Pfam" id="PF24861">
    <property type="entry name" value="SUS_N"/>
    <property type="match status" value="1"/>
</dbReference>
<dbReference type="SUPFAM" id="SSF53756">
    <property type="entry name" value="UDP-Glycosyltransferase/glycogen phosphorylase"/>
    <property type="match status" value="1"/>
</dbReference>
<comment type="function">
    <text evidence="1">Sucrose-cleaving enzyme that provides UDP-glucose and fructose for various metabolic pathways.</text>
</comment>
<comment type="catalytic activity">
    <reaction>
        <text>an NDP-alpha-D-glucose + D-fructose = a ribonucleoside 5'-diphosphate + sucrose + H(+)</text>
        <dbReference type="Rhea" id="RHEA:16241"/>
        <dbReference type="ChEBI" id="CHEBI:15378"/>
        <dbReference type="ChEBI" id="CHEBI:17992"/>
        <dbReference type="ChEBI" id="CHEBI:37721"/>
        <dbReference type="ChEBI" id="CHEBI:57930"/>
        <dbReference type="ChEBI" id="CHEBI:76533"/>
        <dbReference type="EC" id="2.4.1.13"/>
    </reaction>
</comment>
<comment type="subcellular location">
    <subcellularLocation>
        <location evidence="2">Cytoplasm</location>
    </subcellularLocation>
    <subcellularLocation>
        <location evidence="2">Membrane</location>
        <topology evidence="2">Peripheral membrane protein</topology>
    </subcellularLocation>
</comment>
<comment type="alternative products">
    <event type="alternative splicing"/>
    <isoform>
        <id>H6TFZ4-1</id>
        <name>1</name>
        <sequence type="displayed"/>
    </isoform>
    <isoform>
        <id>H6TFZ4-2</id>
        <name>2</name>
        <sequence type="described" ref="VSP_044079"/>
    </isoform>
</comment>
<comment type="tissue specificity">
    <text evidence="2">Predominantly expressed in roots, flowers and immature seeds.</text>
</comment>
<comment type="similarity">
    <text evidence="4">Belongs to the glycosyltransferase 1 family. Plant sucrose synthase subfamily.</text>
</comment>
<comment type="sequence caution" evidence="4">
    <conflict type="erroneous gene model prediction">
        <sequence resource="EMBL-CDS" id="CAE03984"/>
    </conflict>
</comment>
<organism>
    <name type="scientific">Oryza sativa subsp. japonica</name>
    <name type="common">Rice</name>
    <dbReference type="NCBI Taxonomy" id="39947"/>
    <lineage>
        <taxon>Eukaryota</taxon>
        <taxon>Viridiplantae</taxon>
        <taxon>Streptophyta</taxon>
        <taxon>Embryophyta</taxon>
        <taxon>Tracheophyta</taxon>
        <taxon>Spermatophyta</taxon>
        <taxon>Magnoliopsida</taxon>
        <taxon>Liliopsida</taxon>
        <taxon>Poales</taxon>
        <taxon>Poaceae</taxon>
        <taxon>BOP clade</taxon>
        <taxon>Oryzoideae</taxon>
        <taxon>Oryzeae</taxon>
        <taxon>Oryzinae</taxon>
        <taxon>Oryza</taxon>
        <taxon>Oryza sativa</taxon>
    </lineage>
</organism>
<reference key="1">
    <citation type="journal article" date="2011" name="Mol. Cells">
        <title>Identification and characterization of the duplicate rice sucrose synthase genes OsSUS5 and OsSUS7 which are associated with the plasma membrane.</title>
        <authorList>
            <person name="Cho J.I."/>
            <person name="Kim H.B."/>
            <person name="Kim C.Y."/>
            <person name="Hahn T.R."/>
            <person name="Jeon J.S."/>
        </authorList>
    </citation>
    <scope>NUCLEOTIDE SEQUENCE [MRNA] (ISOFORM 1)</scope>
    <scope>GENE FAMILY</scope>
    <scope>SUBCELLULAR LOCATION</scope>
    <scope>TISSUE SPECIFICITY</scope>
    <source>
        <strain>cv. Nipponbare</strain>
    </source>
</reference>
<reference key="2">
    <citation type="journal article" date="2002" name="Nature">
        <title>Sequence and analysis of rice chromosome 4.</title>
        <authorList>
            <person name="Feng Q."/>
            <person name="Zhang Y."/>
            <person name="Hao P."/>
            <person name="Wang S."/>
            <person name="Fu G."/>
            <person name="Huang Y."/>
            <person name="Li Y."/>
            <person name="Zhu J."/>
            <person name="Liu Y."/>
            <person name="Hu X."/>
            <person name="Jia P."/>
            <person name="Zhang Y."/>
            <person name="Zhao Q."/>
            <person name="Ying K."/>
            <person name="Yu S."/>
            <person name="Tang Y."/>
            <person name="Weng Q."/>
            <person name="Zhang L."/>
            <person name="Lu Y."/>
            <person name="Mu J."/>
            <person name="Lu Y."/>
            <person name="Zhang L.S."/>
            <person name="Yu Z."/>
            <person name="Fan D."/>
            <person name="Liu X."/>
            <person name="Lu T."/>
            <person name="Li C."/>
            <person name="Wu Y."/>
            <person name="Sun T."/>
            <person name="Lei H."/>
            <person name="Li T."/>
            <person name="Hu H."/>
            <person name="Guan J."/>
            <person name="Wu M."/>
            <person name="Zhang R."/>
            <person name="Zhou B."/>
            <person name="Chen Z."/>
            <person name="Chen L."/>
            <person name="Jin Z."/>
            <person name="Wang R."/>
            <person name="Yin H."/>
            <person name="Cai Z."/>
            <person name="Ren S."/>
            <person name="Lv G."/>
            <person name="Gu W."/>
            <person name="Zhu G."/>
            <person name="Tu Y."/>
            <person name="Jia J."/>
            <person name="Zhang Y."/>
            <person name="Chen J."/>
            <person name="Kang H."/>
            <person name="Chen X."/>
            <person name="Shao C."/>
            <person name="Sun Y."/>
            <person name="Hu Q."/>
            <person name="Zhang X."/>
            <person name="Zhang W."/>
            <person name="Wang L."/>
            <person name="Ding C."/>
            <person name="Sheng H."/>
            <person name="Gu J."/>
            <person name="Chen S."/>
            <person name="Ni L."/>
            <person name="Zhu F."/>
            <person name="Chen W."/>
            <person name="Lan L."/>
            <person name="Lai Y."/>
            <person name="Cheng Z."/>
            <person name="Gu M."/>
            <person name="Jiang J."/>
            <person name="Li J."/>
            <person name="Hong G."/>
            <person name="Xue Y."/>
            <person name="Han B."/>
        </authorList>
    </citation>
    <scope>NUCLEOTIDE SEQUENCE [LARGE SCALE GENOMIC DNA]</scope>
    <source>
        <strain>cv. Nipponbare</strain>
    </source>
</reference>
<reference key="3">
    <citation type="journal article" date="2005" name="Nature">
        <title>The map-based sequence of the rice genome.</title>
        <authorList>
            <consortium name="International rice genome sequencing project (IRGSP)"/>
        </authorList>
    </citation>
    <scope>NUCLEOTIDE SEQUENCE [LARGE SCALE GENOMIC DNA]</scope>
    <source>
        <strain>cv. Nipponbare</strain>
    </source>
</reference>
<reference key="4">
    <citation type="journal article" date="2008" name="Nucleic Acids Res.">
        <title>The rice annotation project database (RAP-DB): 2008 update.</title>
        <authorList>
            <consortium name="The rice annotation project (RAP)"/>
        </authorList>
    </citation>
    <scope>GENOME REANNOTATION</scope>
    <source>
        <strain>cv. Nipponbare</strain>
    </source>
</reference>
<reference key="5">
    <citation type="journal article" date="2013" name="Rice">
        <title>Improvement of the Oryza sativa Nipponbare reference genome using next generation sequence and optical map data.</title>
        <authorList>
            <person name="Kawahara Y."/>
            <person name="de la Bastide M."/>
            <person name="Hamilton J.P."/>
            <person name="Kanamori H."/>
            <person name="McCombie W.R."/>
            <person name="Ouyang S."/>
            <person name="Schwartz D.C."/>
            <person name="Tanaka T."/>
            <person name="Wu J."/>
            <person name="Zhou S."/>
            <person name="Childs K.L."/>
            <person name="Davidson R.M."/>
            <person name="Lin H."/>
            <person name="Quesada-Ocampo L."/>
            <person name="Vaillancourt B."/>
            <person name="Sakai H."/>
            <person name="Lee S.S."/>
            <person name="Kim J."/>
            <person name="Numa H."/>
            <person name="Itoh T."/>
            <person name="Buell C.R."/>
            <person name="Matsumoto T."/>
        </authorList>
    </citation>
    <scope>GENOME REANNOTATION</scope>
    <source>
        <strain>cv. Nipponbare</strain>
    </source>
</reference>
<reference key="6">
    <citation type="journal article" date="2003" name="Science">
        <title>Collection, mapping, and annotation of over 28,000 cDNA clones from japonica rice.</title>
        <authorList>
            <consortium name="The rice full-length cDNA consortium"/>
        </authorList>
    </citation>
    <scope>NUCLEOTIDE SEQUENCE [LARGE SCALE MRNA] (ISOFORM 2)</scope>
    <source>
        <strain>cv. Nipponbare</strain>
    </source>
</reference>
<reference key="7">
    <citation type="journal article" date="2008" name="Plant Sci.">
        <title>An expression analysis profile for the entire sucrose synthase gene family in rice.</title>
        <authorList>
            <person name="Hirose T."/>
            <person name="Scofield G.N."/>
            <person name="Terao T."/>
        </authorList>
    </citation>
    <scope>GENE FAMILY</scope>
</reference>
<feature type="chain" id="PRO_0000418807" description="Sucrose synthase 5">
    <location>
        <begin position="1"/>
        <end position="855"/>
    </location>
</feature>
<feature type="region of interest" description="GT-B glycosyltransferase" evidence="1">
    <location>
        <begin position="279"/>
        <end position="758"/>
    </location>
</feature>
<feature type="splice variant" id="VSP_044079" description="In isoform 2." evidence="3">
    <location>
        <begin position="589"/>
        <end position="599"/>
    </location>
</feature>
<name>SUS5_ORYSJ</name>
<accession>H6TFZ4</accession>
<accession>Q0JE91</accession>
<accession>Q7XNQ9</accession>
<protein>
    <recommendedName>
        <fullName>Sucrose synthase 5</fullName>
        <shortName>OsSUS5</shortName>
        <ecNumber>2.4.1.13</ecNumber>
    </recommendedName>
    <alternativeName>
        <fullName>Sucrose-UDP glucosyltransferase 5</fullName>
    </alternativeName>
</protein>